<proteinExistence type="inferred from homology"/>
<gene>
    <name evidence="1" type="primary">ttcA</name>
    <name type="ordered locus">Pmen_2962</name>
</gene>
<keyword id="KW-0004">4Fe-4S</keyword>
<keyword id="KW-0067">ATP-binding</keyword>
<keyword id="KW-0963">Cytoplasm</keyword>
<keyword id="KW-0408">Iron</keyword>
<keyword id="KW-0411">Iron-sulfur</keyword>
<keyword id="KW-0460">Magnesium</keyword>
<keyword id="KW-0479">Metal-binding</keyword>
<keyword id="KW-0547">Nucleotide-binding</keyword>
<keyword id="KW-0694">RNA-binding</keyword>
<keyword id="KW-0808">Transferase</keyword>
<keyword id="KW-0819">tRNA processing</keyword>
<keyword id="KW-0820">tRNA-binding</keyword>
<accession>A4XWK1</accession>
<reference key="1">
    <citation type="submission" date="2007-04" db="EMBL/GenBank/DDBJ databases">
        <title>Complete sequence of Pseudomonas mendocina ymp.</title>
        <authorList>
            <consortium name="US DOE Joint Genome Institute"/>
            <person name="Copeland A."/>
            <person name="Lucas S."/>
            <person name="Lapidus A."/>
            <person name="Barry K."/>
            <person name="Glavina del Rio T."/>
            <person name="Dalin E."/>
            <person name="Tice H."/>
            <person name="Pitluck S."/>
            <person name="Kiss H."/>
            <person name="Brettin T."/>
            <person name="Detter J.C."/>
            <person name="Bruce D."/>
            <person name="Han C."/>
            <person name="Schmutz J."/>
            <person name="Larimer F."/>
            <person name="Land M."/>
            <person name="Hauser L."/>
            <person name="Kyrpides N."/>
            <person name="Mikhailova N."/>
            <person name="Hersman L."/>
            <person name="Dubois J."/>
            <person name="Maurice P."/>
            <person name="Richardson P."/>
        </authorList>
    </citation>
    <scope>NUCLEOTIDE SEQUENCE [LARGE SCALE GENOMIC DNA]</scope>
    <source>
        <strain>ymp</strain>
    </source>
</reference>
<comment type="function">
    <text evidence="1">Catalyzes the ATP-dependent 2-thiolation of cytidine in position 32 of tRNA, to form 2-thiocytidine (s(2)C32). The sulfur atoms are provided by the cysteine/cysteine desulfurase (IscS) system.</text>
</comment>
<comment type="catalytic activity">
    <reaction evidence="1">
        <text>cytidine(32) in tRNA + S-sulfanyl-L-cysteinyl-[cysteine desulfurase] + AH2 + ATP = 2-thiocytidine(32) in tRNA + L-cysteinyl-[cysteine desulfurase] + A + AMP + diphosphate + H(+)</text>
        <dbReference type="Rhea" id="RHEA:57048"/>
        <dbReference type="Rhea" id="RHEA-COMP:10288"/>
        <dbReference type="Rhea" id="RHEA-COMP:12157"/>
        <dbReference type="Rhea" id="RHEA-COMP:12158"/>
        <dbReference type="Rhea" id="RHEA-COMP:14821"/>
        <dbReference type="ChEBI" id="CHEBI:13193"/>
        <dbReference type="ChEBI" id="CHEBI:15378"/>
        <dbReference type="ChEBI" id="CHEBI:17499"/>
        <dbReference type="ChEBI" id="CHEBI:29950"/>
        <dbReference type="ChEBI" id="CHEBI:30616"/>
        <dbReference type="ChEBI" id="CHEBI:33019"/>
        <dbReference type="ChEBI" id="CHEBI:61963"/>
        <dbReference type="ChEBI" id="CHEBI:82748"/>
        <dbReference type="ChEBI" id="CHEBI:141453"/>
        <dbReference type="ChEBI" id="CHEBI:456215"/>
    </reaction>
    <physiologicalReaction direction="left-to-right" evidence="1">
        <dbReference type="Rhea" id="RHEA:57049"/>
    </physiologicalReaction>
</comment>
<comment type="cofactor">
    <cofactor evidence="1">
        <name>Mg(2+)</name>
        <dbReference type="ChEBI" id="CHEBI:18420"/>
    </cofactor>
</comment>
<comment type="cofactor">
    <cofactor evidence="1">
        <name>[4Fe-4S] cluster</name>
        <dbReference type="ChEBI" id="CHEBI:49883"/>
    </cofactor>
    <text evidence="1">Binds 1 [4Fe-4S] cluster per subunit. The cluster is chelated by three Cys residues, the fourth Fe has a free coordination site that may bind a sulfur atom transferred from the persulfide of IscS.</text>
</comment>
<comment type="pathway">
    <text evidence="1">tRNA modification.</text>
</comment>
<comment type="subunit">
    <text evidence="1">Homodimer.</text>
</comment>
<comment type="subcellular location">
    <subcellularLocation>
        <location evidence="1">Cytoplasm</location>
    </subcellularLocation>
</comment>
<comment type="miscellaneous">
    <text evidence="1">The thiolation reaction likely consists of two steps: a first activation step by ATP to form an adenylated intermediate of the target base of tRNA, and a second nucleophilic substitution step of the sulfur (S) atom supplied by the hydrosulfide attached to the Fe-S cluster.</text>
</comment>
<comment type="similarity">
    <text evidence="1">Belongs to the TtcA family.</text>
</comment>
<dbReference type="EC" id="2.8.1.-" evidence="1"/>
<dbReference type="EMBL" id="CP000680">
    <property type="protein sequence ID" value="ABP85717.1"/>
    <property type="molecule type" value="Genomic_DNA"/>
</dbReference>
<dbReference type="SMR" id="A4XWK1"/>
<dbReference type="STRING" id="399739.Pmen_2962"/>
<dbReference type="KEGG" id="pmy:Pmen_2962"/>
<dbReference type="eggNOG" id="COG0037">
    <property type="taxonomic scope" value="Bacteria"/>
</dbReference>
<dbReference type="HOGENOM" id="CLU_026481_0_0_6"/>
<dbReference type="OrthoDB" id="9801054at2"/>
<dbReference type="GO" id="GO:0005737">
    <property type="term" value="C:cytoplasm"/>
    <property type="evidence" value="ECO:0007669"/>
    <property type="project" value="UniProtKB-SubCell"/>
</dbReference>
<dbReference type="GO" id="GO:0051539">
    <property type="term" value="F:4 iron, 4 sulfur cluster binding"/>
    <property type="evidence" value="ECO:0007669"/>
    <property type="project" value="UniProtKB-UniRule"/>
</dbReference>
<dbReference type="GO" id="GO:0005524">
    <property type="term" value="F:ATP binding"/>
    <property type="evidence" value="ECO:0007669"/>
    <property type="project" value="UniProtKB-UniRule"/>
</dbReference>
<dbReference type="GO" id="GO:0000287">
    <property type="term" value="F:magnesium ion binding"/>
    <property type="evidence" value="ECO:0007669"/>
    <property type="project" value="UniProtKB-UniRule"/>
</dbReference>
<dbReference type="GO" id="GO:0016783">
    <property type="term" value="F:sulfurtransferase activity"/>
    <property type="evidence" value="ECO:0007669"/>
    <property type="project" value="UniProtKB-UniRule"/>
</dbReference>
<dbReference type="GO" id="GO:0000049">
    <property type="term" value="F:tRNA binding"/>
    <property type="evidence" value="ECO:0007669"/>
    <property type="project" value="UniProtKB-KW"/>
</dbReference>
<dbReference type="GO" id="GO:0034227">
    <property type="term" value="P:tRNA thio-modification"/>
    <property type="evidence" value="ECO:0007669"/>
    <property type="project" value="UniProtKB-UniRule"/>
</dbReference>
<dbReference type="CDD" id="cd24138">
    <property type="entry name" value="TtcA-like"/>
    <property type="match status" value="1"/>
</dbReference>
<dbReference type="Gene3D" id="3.40.50.620">
    <property type="entry name" value="HUPs"/>
    <property type="match status" value="1"/>
</dbReference>
<dbReference type="HAMAP" id="MF_01850">
    <property type="entry name" value="TtcA"/>
    <property type="match status" value="1"/>
</dbReference>
<dbReference type="InterPro" id="IPR014729">
    <property type="entry name" value="Rossmann-like_a/b/a_fold"/>
</dbReference>
<dbReference type="InterPro" id="IPR011063">
    <property type="entry name" value="TilS/TtcA_N"/>
</dbReference>
<dbReference type="InterPro" id="IPR012089">
    <property type="entry name" value="tRNA_Cyd_32_2_STrfase"/>
</dbReference>
<dbReference type="InterPro" id="IPR035107">
    <property type="entry name" value="tRNA_thiolation_TtcA_Ctu1"/>
</dbReference>
<dbReference type="NCBIfam" id="NF007972">
    <property type="entry name" value="PRK10696.1"/>
    <property type="match status" value="1"/>
</dbReference>
<dbReference type="PANTHER" id="PTHR43686:SF1">
    <property type="entry name" value="AMINOTRAN_5 DOMAIN-CONTAINING PROTEIN"/>
    <property type="match status" value="1"/>
</dbReference>
<dbReference type="PANTHER" id="PTHR43686">
    <property type="entry name" value="SULFURTRANSFERASE-RELATED"/>
    <property type="match status" value="1"/>
</dbReference>
<dbReference type="Pfam" id="PF01171">
    <property type="entry name" value="ATP_bind_3"/>
    <property type="match status" value="1"/>
</dbReference>
<dbReference type="PIRSF" id="PIRSF004976">
    <property type="entry name" value="ATPase_YdaO"/>
    <property type="match status" value="1"/>
</dbReference>
<dbReference type="SUPFAM" id="SSF52402">
    <property type="entry name" value="Adenine nucleotide alpha hydrolases-like"/>
    <property type="match status" value="1"/>
</dbReference>
<name>TTCA_ECTM1</name>
<evidence type="ECO:0000255" key="1">
    <source>
        <dbReference type="HAMAP-Rule" id="MF_01850"/>
    </source>
</evidence>
<feature type="chain" id="PRO_0000348797" description="tRNA-cytidine(32) 2-sulfurtransferase">
    <location>
        <begin position="1"/>
        <end position="274"/>
    </location>
</feature>
<feature type="short sequence motif" description="PP-loop motif" evidence="1">
    <location>
        <begin position="40"/>
        <end position="45"/>
    </location>
</feature>
<feature type="binding site" evidence="1">
    <location>
        <position position="115"/>
    </location>
    <ligand>
        <name>[4Fe-4S] cluster</name>
        <dbReference type="ChEBI" id="CHEBI:49883"/>
    </ligand>
</feature>
<feature type="binding site" evidence="1">
    <location>
        <position position="118"/>
    </location>
    <ligand>
        <name>[4Fe-4S] cluster</name>
        <dbReference type="ChEBI" id="CHEBI:49883"/>
    </ligand>
</feature>
<feature type="binding site" evidence="1">
    <location>
        <position position="206"/>
    </location>
    <ligand>
        <name>[4Fe-4S] cluster</name>
        <dbReference type="ChEBI" id="CHEBI:49883"/>
    </ligand>
</feature>
<protein>
    <recommendedName>
        <fullName evidence="1">tRNA-cytidine(32) 2-sulfurtransferase</fullName>
        <ecNumber evidence="1">2.8.1.-</ecNumber>
    </recommendedName>
    <alternativeName>
        <fullName evidence="1">Two-thiocytidine biosynthesis protein A</fullName>
    </alternativeName>
    <alternativeName>
        <fullName evidence="1">tRNA 2-thiocytidine biosynthesis protein TtcA</fullName>
    </alternativeName>
</protein>
<sequence length="274" mass="31061">MGTLSVNQNKLQKRIRRLAGEAITDFNMIEDGDKVMVCLSGGKDSYTMLDVLLYLQKVAPIKFEIVAVNMDQKQPGFPEHVLPAYLESIGVAYHIIEKDTYSVVKEKIPEGKTTCSLCSRLRRGTLYTYADEIGATKMALGHHRDDILETFFLNMFYGGTLKAMPPKLLSDDGRNVVIRPLAYCAEADIEAYSQLKEFPIIPCNLCGSQENLQRQVVKEMLQEWERKSPGRVEIMFRALQNVHPSQLADRNLFDFKSLKIDDSATPRFLDVMSL</sequence>
<organism>
    <name type="scientific">Ectopseudomonas mendocina (strain ymp)</name>
    <name type="common">Pseudomonas mendocina</name>
    <dbReference type="NCBI Taxonomy" id="399739"/>
    <lineage>
        <taxon>Bacteria</taxon>
        <taxon>Pseudomonadati</taxon>
        <taxon>Pseudomonadota</taxon>
        <taxon>Gammaproteobacteria</taxon>
        <taxon>Pseudomonadales</taxon>
        <taxon>Pseudomonadaceae</taxon>
        <taxon>Ectopseudomonas</taxon>
    </lineage>
</organism>